<accession>Q5QJJ0</accession>
<reference key="1">
    <citation type="submission" date="2003-07" db="EMBL/GenBank/DDBJ databases">
        <title>Complete sequence of two plasmids that possess antibiotic resistance genes in Salmonella enterica Serovar Typhimurium U302 MR strain G8430.</title>
        <authorList>
            <person name="Chen C.-Y."/>
            <person name="Nace G.W."/>
            <person name="Briggs C."/>
            <person name="Solow B."/>
            <person name="Fratamico P."/>
        </authorList>
    </citation>
    <scope>NUCLEOTIDE SEQUENCE [GENOMIC DNA]</scope>
    <source>
        <strain>G8430</strain>
    </source>
</reference>
<dbReference type="EMBL" id="AY333434">
    <property type="protein sequence ID" value="AAR05667.1"/>
    <property type="molecule type" value="Genomic_DNA"/>
</dbReference>
<dbReference type="RefSeq" id="YP_194811.1">
    <property type="nucleotide sequence ID" value="NC_006816.1"/>
</dbReference>
<dbReference type="InterPro" id="IPR016388">
    <property type="entry name" value="Put_partitioning_SopC"/>
</dbReference>
<dbReference type="PIRSF" id="PIRSF003278">
    <property type="entry name" value="Partitioning_SopC"/>
    <property type="match status" value="1"/>
</dbReference>
<keyword id="KW-0614">Plasmid</keyword>
<protein>
    <recommendedName>
        <fullName>Uncharacterized protein YuaZ</fullName>
    </recommendedName>
</protein>
<gene>
    <name type="primary">yuaZ</name>
</gene>
<feature type="chain" id="PRO_0000262319" description="Uncharacterized protein YuaZ">
    <location>
        <begin position="1"/>
        <end position="90"/>
    </location>
</feature>
<name>YUAZ_SALTM</name>
<sequence>MRLYACCGLLLCPAYPQHFAHGYVDKIPGYPGRAGTLTGLHPMQVCRCRRPPHPVTFRRSSSTRCGFGAAPAFVCGRPVTGAARPDGGRM</sequence>
<organism>
    <name type="scientific">Salmonella typhimurium</name>
    <dbReference type="NCBI Taxonomy" id="90371"/>
    <lineage>
        <taxon>Bacteria</taxon>
        <taxon>Pseudomonadati</taxon>
        <taxon>Pseudomonadota</taxon>
        <taxon>Gammaproteobacteria</taxon>
        <taxon>Enterobacterales</taxon>
        <taxon>Enterobacteriaceae</taxon>
        <taxon>Salmonella</taxon>
    </lineage>
</organism>
<geneLocation type="plasmid">
    <name>pU302L</name>
</geneLocation>
<proteinExistence type="predicted"/>